<accession>B0TGB2</accession>
<gene>
    <name evidence="1" type="primary">rsmH</name>
    <name type="synonym">mraW</name>
    <name type="ordered locus">Helmi_19830</name>
    <name type="ORF">HM1_2051</name>
</gene>
<reference key="1">
    <citation type="journal article" date="2008" name="J. Bacteriol.">
        <title>The genome of Heliobacterium modesticaldum, a phototrophic representative of the Firmicutes containing the simplest photosynthetic apparatus.</title>
        <authorList>
            <person name="Sattley W.M."/>
            <person name="Madigan M.T."/>
            <person name="Swingley W.D."/>
            <person name="Cheung P.C."/>
            <person name="Clocksin K.M."/>
            <person name="Conrad A.L."/>
            <person name="Dejesa L.C."/>
            <person name="Honchak B.M."/>
            <person name="Jung D.O."/>
            <person name="Karbach L.E."/>
            <person name="Kurdoglu A."/>
            <person name="Lahiri S."/>
            <person name="Mastrian S.D."/>
            <person name="Page L.E."/>
            <person name="Taylor H.L."/>
            <person name="Wang Z.T."/>
            <person name="Raymond J."/>
            <person name="Chen M."/>
            <person name="Blankenship R.E."/>
            <person name="Touchman J.W."/>
        </authorList>
    </citation>
    <scope>NUCLEOTIDE SEQUENCE [LARGE SCALE GENOMIC DNA]</scope>
    <source>
        <strain>ATCC 51547 / Ice1</strain>
    </source>
</reference>
<organism>
    <name type="scientific">Heliobacterium modesticaldum (strain ATCC 51547 / Ice1)</name>
    <dbReference type="NCBI Taxonomy" id="498761"/>
    <lineage>
        <taxon>Bacteria</taxon>
        <taxon>Bacillati</taxon>
        <taxon>Bacillota</taxon>
        <taxon>Clostridia</taxon>
        <taxon>Eubacteriales</taxon>
        <taxon>Heliobacteriaceae</taxon>
        <taxon>Heliomicrobium</taxon>
    </lineage>
</organism>
<name>RSMH_HELMI</name>
<proteinExistence type="inferred from homology"/>
<evidence type="ECO:0000255" key="1">
    <source>
        <dbReference type="HAMAP-Rule" id="MF_01007"/>
    </source>
</evidence>
<evidence type="ECO:0000256" key="2">
    <source>
        <dbReference type="SAM" id="MobiDB-lite"/>
    </source>
</evidence>
<protein>
    <recommendedName>
        <fullName evidence="1">Ribosomal RNA small subunit methyltransferase H</fullName>
        <ecNumber evidence="1">2.1.1.199</ecNumber>
    </recommendedName>
    <alternativeName>
        <fullName evidence="1">16S rRNA m(4)C1402 methyltransferase</fullName>
    </alternativeName>
    <alternativeName>
        <fullName evidence="1">rRNA (cytosine-N(4)-)-methyltransferase RsmH</fullName>
    </alternativeName>
</protein>
<keyword id="KW-0963">Cytoplasm</keyword>
<keyword id="KW-0489">Methyltransferase</keyword>
<keyword id="KW-1185">Reference proteome</keyword>
<keyword id="KW-0698">rRNA processing</keyword>
<keyword id="KW-0949">S-adenosyl-L-methionine</keyword>
<keyword id="KW-0808">Transferase</keyword>
<dbReference type="EC" id="2.1.1.199" evidence="1"/>
<dbReference type="EMBL" id="CP000930">
    <property type="protein sequence ID" value="ABZ84608.1"/>
    <property type="molecule type" value="Genomic_DNA"/>
</dbReference>
<dbReference type="RefSeq" id="WP_012283108.1">
    <property type="nucleotide sequence ID" value="NC_010337.2"/>
</dbReference>
<dbReference type="SMR" id="B0TGB2"/>
<dbReference type="STRING" id="498761.HM1_2051"/>
<dbReference type="KEGG" id="hmo:HM1_2051"/>
<dbReference type="eggNOG" id="COG0275">
    <property type="taxonomic scope" value="Bacteria"/>
</dbReference>
<dbReference type="HOGENOM" id="CLU_038422_2_0_9"/>
<dbReference type="OrthoDB" id="9806637at2"/>
<dbReference type="Proteomes" id="UP000008550">
    <property type="component" value="Chromosome"/>
</dbReference>
<dbReference type="GO" id="GO:0005737">
    <property type="term" value="C:cytoplasm"/>
    <property type="evidence" value="ECO:0007669"/>
    <property type="project" value="UniProtKB-SubCell"/>
</dbReference>
<dbReference type="GO" id="GO:0071424">
    <property type="term" value="F:rRNA (cytosine-N4-)-methyltransferase activity"/>
    <property type="evidence" value="ECO:0007669"/>
    <property type="project" value="UniProtKB-UniRule"/>
</dbReference>
<dbReference type="GO" id="GO:0070475">
    <property type="term" value="P:rRNA base methylation"/>
    <property type="evidence" value="ECO:0007669"/>
    <property type="project" value="UniProtKB-UniRule"/>
</dbReference>
<dbReference type="FunFam" id="1.10.150.170:FF:000001">
    <property type="entry name" value="Ribosomal RNA small subunit methyltransferase H"/>
    <property type="match status" value="1"/>
</dbReference>
<dbReference type="Gene3D" id="1.10.150.170">
    <property type="entry name" value="Putative methyltransferase TM0872, insert domain"/>
    <property type="match status" value="1"/>
</dbReference>
<dbReference type="Gene3D" id="3.40.50.150">
    <property type="entry name" value="Vaccinia Virus protein VP39"/>
    <property type="match status" value="1"/>
</dbReference>
<dbReference type="HAMAP" id="MF_01007">
    <property type="entry name" value="16SrRNA_methyltr_H"/>
    <property type="match status" value="1"/>
</dbReference>
<dbReference type="InterPro" id="IPR002903">
    <property type="entry name" value="RsmH"/>
</dbReference>
<dbReference type="InterPro" id="IPR023397">
    <property type="entry name" value="SAM-dep_MeTrfase_MraW_recog"/>
</dbReference>
<dbReference type="InterPro" id="IPR029063">
    <property type="entry name" value="SAM-dependent_MTases_sf"/>
</dbReference>
<dbReference type="NCBIfam" id="TIGR00006">
    <property type="entry name" value="16S rRNA (cytosine(1402)-N(4))-methyltransferase RsmH"/>
    <property type="match status" value="1"/>
</dbReference>
<dbReference type="PANTHER" id="PTHR11265:SF0">
    <property type="entry name" value="12S RRNA N4-METHYLCYTIDINE METHYLTRANSFERASE"/>
    <property type="match status" value="1"/>
</dbReference>
<dbReference type="PANTHER" id="PTHR11265">
    <property type="entry name" value="S-ADENOSYL-METHYLTRANSFERASE MRAW"/>
    <property type="match status" value="1"/>
</dbReference>
<dbReference type="Pfam" id="PF01795">
    <property type="entry name" value="Methyltransf_5"/>
    <property type="match status" value="1"/>
</dbReference>
<dbReference type="PIRSF" id="PIRSF004486">
    <property type="entry name" value="MraW"/>
    <property type="match status" value="1"/>
</dbReference>
<dbReference type="SUPFAM" id="SSF81799">
    <property type="entry name" value="Putative methyltransferase TM0872, insert domain"/>
    <property type="match status" value="1"/>
</dbReference>
<dbReference type="SUPFAM" id="SSF53335">
    <property type="entry name" value="S-adenosyl-L-methionine-dependent methyltransferases"/>
    <property type="match status" value="1"/>
</dbReference>
<comment type="function">
    <text evidence="1">Specifically methylates the N4 position of cytidine in position 1402 (C1402) of 16S rRNA.</text>
</comment>
<comment type="catalytic activity">
    <reaction evidence="1">
        <text>cytidine(1402) in 16S rRNA + S-adenosyl-L-methionine = N(4)-methylcytidine(1402) in 16S rRNA + S-adenosyl-L-homocysteine + H(+)</text>
        <dbReference type="Rhea" id="RHEA:42928"/>
        <dbReference type="Rhea" id="RHEA-COMP:10286"/>
        <dbReference type="Rhea" id="RHEA-COMP:10287"/>
        <dbReference type="ChEBI" id="CHEBI:15378"/>
        <dbReference type="ChEBI" id="CHEBI:57856"/>
        <dbReference type="ChEBI" id="CHEBI:59789"/>
        <dbReference type="ChEBI" id="CHEBI:74506"/>
        <dbReference type="ChEBI" id="CHEBI:82748"/>
        <dbReference type="EC" id="2.1.1.199"/>
    </reaction>
</comment>
<comment type="subcellular location">
    <subcellularLocation>
        <location evidence="1">Cytoplasm</location>
    </subcellularLocation>
</comment>
<comment type="similarity">
    <text evidence="1">Belongs to the methyltransferase superfamily. RsmH family.</text>
</comment>
<feature type="chain" id="PRO_0000386927" description="Ribosomal RNA small subunit methyltransferase H">
    <location>
        <begin position="1"/>
        <end position="313"/>
    </location>
</feature>
<feature type="region of interest" description="Disordered" evidence="2">
    <location>
        <begin position="291"/>
        <end position="313"/>
    </location>
</feature>
<feature type="binding site" evidence="1">
    <location>
        <begin position="33"/>
        <end position="35"/>
    </location>
    <ligand>
        <name>S-adenosyl-L-methionine</name>
        <dbReference type="ChEBI" id="CHEBI:59789"/>
    </ligand>
</feature>
<feature type="binding site" evidence="1">
    <location>
        <position position="53"/>
    </location>
    <ligand>
        <name>S-adenosyl-L-methionine</name>
        <dbReference type="ChEBI" id="CHEBI:59789"/>
    </ligand>
</feature>
<feature type="binding site" evidence="1">
    <location>
        <position position="80"/>
    </location>
    <ligand>
        <name>S-adenosyl-L-methionine</name>
        <dbReference type="ChEBI" id="CHEBI:59789"/>
    </ligand>
</feature>
<feature type="binding site" evidence="1">
    <location>
        <position position="102"/>
    </location>
    <ligand>
        <name>S-adenosyl-L-methionine</name>
        <dbReference type="ChEBI" id="CHEBI:59789"/>
    </ligand>
</feature>
<feature type="binding site" evidence="1">
    <location>
        <position position="109"/>
    </location>
    <ligand>
        <name>S-adenosyl-L-methionine</name>
        <dbReference type="ChEBI" id="CHEBI:59789"/>
    </ligand>
</feature>
<sequence>MVFHHIPVLLHQVLEVLKPRPEGVYLDGTVGGGGHSAAILQKLSGRGRVIGLDQDPAALAAAGRKLASFGDRVTLVRSNFRHIGAVVAELGLTGKIDGILLDIGVSSHQLDEAERGFTYRMDAPLDMRMNPESALTASKLLNEAPEGEIARILRDYGEERWAKRIAQFIVKRRALQPLERTGELVDIIRAAIPAAARQEGGHPAKRTFQALRIAVNDELGALEEALPAALEALAPGGRLAVISFHSLEDRIVKSFFAEQARGCLCPPDFPVCACGNRPKVKIITKKPLVGSDEEMRANPRAQSAKLRAAEKIR</sequence>